<keyword id="KW-0004">4Fe-4S</keyword>
<keyword id="KW-0249">Electron transport</keyword>
<keyword id="KW-0408">Iron</keyword>
<keyword id="KW-0411">Iron-sulfur</keyword>
<keyword id="KW-0479">Metal-binding</keyword>
<keyword id="KW-0500">Molybdenum</keyword>
<keyword id="KW-0534">Nitrate assimilation</keyword>
<keyword id="KW-0560">Oxidoreductase</keyword>
<keyword id="KW-0574">Periplasm</keyword>
<keyword id="KW-0732">Signal</keyword>
<keyword id="KW-0813">Transport</keyword>
<organism>
    <name type="scientific">Escherichia coli O6:K15:H31 (strain 536 / UPEC)</name>
    <dbReference type="NCBI Taxonomy" id="362663"/>
    <lineage>
        <taxon>Bacteria</taxon>
        <taxon>Pseudomonadati</taxon>
        <taxon>Pseudomonadota</taxon>
        <taxon>Gammaproteobacteria</taxon>
        <taxon>Enterobacterales</taxon>
        <taxon>Enterobacteriaceae</taxon>
        <taxon>Escherichia</taxon>
    </lineage>
</organism>
<reference key="1">
    <citation type="journal article" date="2006" name="Mol. Microbiol.">
        <title>Role of pathogenicity island-associated integrases in the genome plasticity of uropathogenic Escherichia coli strain 536.</title>
        <authorList>
            <person name="Hochhut B."/>
            <person name="Wilde C."/>
            <person name="Balling G."/>
            <person name="Middendorf B."/>
            <person name="Dobrindt U."/>
            <person name="Brzuszkiewicz E."/>
            <person name="Gottschalk G."/>
            <person name="Carniel E."/>
            <person name="Hacker J."/>
        </authorList>
    </citation>
    <scope>NUCLEOTIDE SEQUENCE [LARGE SCALE GENOMIC DNA]</scope>
    <source>
        <strain>536 / UPEC</strain>
    </source>
</reference>
<proteinExistence type="inferred from homology"/>
<protein>
    <recommendedName>
        <fullName evidence="1">Periplasmic nitrate reductase</fullName>
        <ecNumber evidence="1">1.9.6.1</ecNumber>
    </recommendedName>
</protein>
<feature type="signal peptide" description="Tat-type signal" evidence="1">
    <location>
        <begin position="1"/>
        <end position="31"/>
    </location>
</feature>
<feature type="chain" id="PRO_0000256071" description="Periplasmic nitrate reductase" evidence="1">
    <location>
        <begin position="32"/>
        <end position="828"/>
    </location>
</feature>
<feature type="domain" description="4Fe-4S Mo/W bis-MGD-type" evidence="1">
    <location>
        <begin position="39"/>
        <end position="95"/>
    </location>
</feature>
<feature type="binding site" evidence="1">
    <location>
        <position position="46"/>
    </location>
    <ligand>
        <name>[4Fe-4S] cluster</name>
        <dbReference type="ChEBI" id="CHEBI:49883"/>
    </ligand>
</feature>
<feature type="binding site" evidence="1">
    <location>
        <position position="49"/>
    </location>
    <ligand>
        <name>[4Fe-4S] cluster</name>
        <dbReference type="ChEBI" id="CHEBI:49883"/>
    </ligand>
</feature>
<feature type="binding site" evidence="1">
    <location>
        <position position="53"/>
    </location>
    <ligand>
        <name>[4Fe-4S] cluster</name>
        <dbReference type="ChEBI" id="CHEBI:49883"/>
    </ligand>
</feature>
<feature type="binding site" evidence="1">
    <location>
        <position position="81"/>
    </location>
    <ligand>
        <name>[4Fe-4S] cluster</name>
        <dbReference type="ChEBI" id="CHEBI:49883"/>
    </ligand>
</feature>
<feature type="binding site" evidence="1">
    <location>
        <position position="83"/>
    </location>
    <ligand>
        <name>Mo-bis(molybdopterin guanine dinucleotide)</name>
        <dbReference type="ChEBI" id="CHEBI:60539"/>
    </ligand>
</feature>
<feature type="binding site" evidence="1">
    <location>
        <position position="150"/>
    </location>
    <ligand>
        <name>Mo-bis(molybdopterin guanine dinucleotide)</name>
        <dbReference type="ChEBI" id="CHEBI:60539"/>
    </ligand>
</feature>
<feature type="binding site" evidence="1">
    <location>
        <position position="175"/>
    </location>
    <ligand>
        <name>Mo-bis(molybdopterin guanine dinucleotide)</name>
        <dbReference type="ChEBI" id="CHEBI:60539"/>
    </ligand>
</feature>
<feature type="binding site" evidence="1">
    <location>
        <position position="179"/>
    </location>
    <ligand>
        <name>Mo-bis(molybdopterin guanine dinucleotide)</name>
        <dbReference type="ChEBI" id="CHEBI:60539"/>
    </ligand>
</feature>
<feature type="binding site" evidence="1">
    <location>
        <begin position="212"/>
        <end position="219"/>
    </location>
    <ligand>
        <name>Mo-bis(molybdopterin guanine dinucleotide)</name>
        <dbReference type="ChEBI" id="CHEBI:60539"/>
    </ligand>
</feature>
<feature type="binding site" evidence="1">
    <location>
        <begin position="243"/>
        <end position="247"/>
    </location>
    <ligand>
        <name>Mo-bis(molybdopterin guanine dinucleotide)</name>
        <dbReference type="ChEBI" id="CHEBI:60539"/>
    </ligand>
</feature>
<feature type="binding site" evidence="1">
    <location>
        <begin position="262"/>
        <end position="264"/>
    </location>
    <ligand>
        <name>Mo-bis(molybdopterin guanine dinucleotide)</name>
        <dbReference type="ChEBI" id="CHEBI:60539"/>
    </ligand>
</feature>
<feature type="binding site" evidence="1">
    <location>
        <position position="372"/>
    </location>
    <ligand>
        <name>Mo-bis(molybdopterin guanine dinucleotide)</name>
        <dbReference type="ChEBI" id="CHEBI:60539"/>
    </ligand>
</feature>
<feature type="binding site" evidence="1">
    <location>
        <position position="376"/>
    </location>
    <ligand>
        <name>Mo-bis(molybdopterin guanine dinucleotide)</name>
        <dbReference type="ChEBI" id="CHEBI:60539"/>
    </ligand>
</feature>
<feature type="binding site" evidence="1">
    <location>
        <position position="482"/>
    </location>
    <ligand>
        <name>Mo-bis(molybdopterin guanine dinucleotide)</name>
        <dbReference type="ChEBI" id="CHEBI:60539"/>
    </ligand>
</feature>
<feature type="binding site" evidence="1">
    <location>
        <begin position="508"/>
        <end position="509"/>
    </location>
    <ligand>
        <name>Mo-bis(molybdopterin guanine dinucleotide)</name>
        <dbReference type="ChEBI" id="CHEBI:60539"/>
    </ligand>
</feature>
<feature type="binding site" evidence="1">
    <location>
        <position position="531"/>
    </location>
    <ligand>
        <name>Mo-bis(molybdopterin guanine dinucleotide)</name>
        <dbReference type="ChEBI" id="CHEBI:60539"/>
    </ligand>
</feature>
<feature type="binding site" evidence="1">
    <location>
        <position position="558"/>
    </location>
    <ligand>
        <name>Mo-bis(molybdopterin guanine dinucleotide)</name>
        <dbReference type="ChEBI" id="CHEBI:60539"/>
    </ligand>
</feature>
<feature type="binding site" evidence="1">
    <location>
        <begin position="718"/>
        <end position="727"/>
    </location>
    <ligand>
        <name>Mo-bis(molybdopterin guanine dinucleotide)</name>
        <dbReference type="ChEBI" id="CHEBI:60539"/>
    </ligand>
</feature>
<feature type="binding site" evidence="1">
    <location>
        <position position="794"/>
    </location>
    <ligand>
        <name>substrate</name>
    </ligand>
</feature>
<feature type="binding site" evidence="1">
    <location>
        <position position="802"/>
    </location>
    <ligand>
        <name>Mo-bis(molybdopterin guanine dinucleotide)</name>
        <dbReference type="ChEBI" id="CHEBI:60539"/>
    </ligand>
</feature>
<feature type="binding site" evidence="1">
    <location>
        <position position="819"/>
    </location>
    <ligand>
        <name>Mo-bis(molybdopterin guanine dinucleotide)</name>
        <dbReference type="ChEBI" id="CHEBI:60539"/>
    </ligand>
</feature>
<comment type="function">
    <text evidence="1">Catalytic subunit of the periplasmic nitrate reductase complex NapAB. Receives electrons from NapB and catalyzes the reduction of nitrate to nitrite.</text>
</comment>
<comment type="catalytic activity">
    <reaction evidence="1">
        <text>2 Fe(II)-[cytochrome] + nitrate + 2 H(+) = 2 Fe(III)-[cytochrome] + nitrite + H2O</text>
        <dbReference type="Rhea" id="RHEA:12909"/>
        <dbReference type="Rhea" id="RHEA-COMP:11777"/>
        <dbReference type="Rhea" id="RHEA-COMP:11778"/>
        <dbReference type="ChEBI" id="CHEBI:15377"/>
        <dbReference type="ChEBI" id="CHEBI:15378"/>
        <dbReference type="ChEBI" id="CHEBI:16301"/>
        <dbReference type="ChEBI" id="CHEBI:17632"/>
        <dbReference type="ChEBI" id="CHEBI:29033"/>
        <dbReference type="ChEBI" id="CHEBI:29034"/>
        <dbReference type="EC" id="1.9.6.1"/>
    </reaction>
</comment>
<comment type="cofactor">
    <cofactor evidence="1">
        <name>[4Fe-4S] cluster</name>
        <dbReference type="ChEBI" id="CHEBI:49883"/>
    </cofactor>
    <text evidence="1">Binds 1 [4Fe-4S] cluster.</text>
</comment>
<comment type="cofactor">
    <cofactor evidence="1">
        <name>Mo-bis(molybdopterin guanine dinucleotide)</name>
        <dbReference type="ChEBI" id="CHEBI:60539"/>
    </cofactor>
    <text evidence="1">Binds 1 molybdenum-bis(molybdopterin guanine dinucleotide) (Mo-bis-MGD) cofactor per subunit.</text>
</comment>
<comment type="subunit">
    <text evidence="1">Component of the periplasmic nitrate reductase NapAB complex composed of NapA and NapB.</text>
</comment>
<comment type="subcellular location">
    <subcellularLocation>
        <location evidence="1">Periplasm</location>
    </subcellularLocation>
</comment>
<comment type="PTM">
    <text evidence="1">Predicted to be exported by the Tat system. The position of the signal peptide cleavage has not been experimentally proven.</text>
</comment>
<comment type="similarity">
    <text evidence="1 2">Belongs to the prokaryotic molybdopterin-containing oxidoreductase family. NasA/NapA/NarB subfamily.</text>
</comment>
<gene>
    <name evidence="1" type="primary">napA</name>
    <name type="ordered locus">ECP_2247</name>
</gene>
<name>NAPA_ECOL5</name>
<dbReference type="EC" id="1.9.6.1" evidence="1"/>
<dbReference type="EMBL" id="CP000247">
    <property type="protein sequence ID" value="ABG70243.1"/>
    <property type="molecule type" value="Genomic_DNA"/>
</dbReference>
<dbReference type="RefSeq" id="WP_000778064.1">
    <property type="nucleotide sequence ID" value="NC_008253.1"/>
</dbReference>
<dbReference type="SMR" id="Q0TFN6"/>
<dbReference type="KEGG" id="ecp:ECP_2247"/>
<dbReference type="HOGENOM" id="CLU_000422_13_4_6"/>
<dbReference type="Proteomes" id="UP000009182">
    <property type="component" value="Chromosome"/>
</dbReference>
<dbReference type="GO" id="GO:0016020">
    <property type="term" value="C:membrane"/>
    <property type="evidence" value="ECO:0007669"/>
    <property type="project" value="TreeGrafter"/>
</dbReference>
<dbReference type="GO" id="GO:0009325">
    <property type="term" value="C:nitrate reductase complex"/>
    <property type="evidence" value="ECO:0007669"/>
    <property type="project" value="TreeGrafter"/>
</dbReference>
<dbReference type="GO" id="GO:0042597">
    <property type="term" value="C:periplasmic space"/>
    <property type="evidence" value="ECO:0007669"/>
    <property type="project" value="UniProtKB-SubCell"/>
</dbReference>
<dbReference type="GO" id="GO:0051539">
    <property type="term" value="F:4 iron, 4 sulfur cluster binding"/>
    <property type="evidence" value="ECO:0007669"/>
    <property type="project" value="UniProtKB-KW"/>
</dbReference>
<dbReference type="GO" id="GO:0009055">
    <property type="term" value="F:electron transfer activity"/>
    <property type="evidence" value="ECO:0007669"/>
    <property type="project" value="UniProtKB-UniRule"/>
</dbReference>
<dbReference type="GO" id="GO:0005506">
    <property type="term" value="F:iron ion binding"/>
    <property type="evidence" value="ECO:0007669"/>
    <property type="project" value="UniProtKB-UniRule"/>
</dbReference>
<dbReference type="GO" id="GO:0030151">
    <property type="term" value="F:molybdenum ion binding"/>
    <property type="evidence" value="ECO:0007669"/>
    <property type="project" value="InterPro"/>
</dbReference>
<dbReference type="GO" id="GO:0043546">
    <property type="term" value="F:molybdopterin cofactor binding"/>
    <property type="evidence" value="ECO:0007669"/>
    <property type="project" value="InterPro"/>
</dbReference>
<dbReference type="GO" id="GO:0050140">
    <property type="term" value="F:nitrate reductase (cytochrome) activity"/>
    <property type="evidence" value="ECO:0007669"/>
    <property type="project" value="UniProtKB-EC"/>
</dbReference>
<dbReference type="GO" id="GO:0045333">
    <property type="term" value="P:cellular respiration"/>
    <property type="evidence" value="ECO:0007669"/>
    <property type="project" value="UniProtKB-ARBA"/>
</dbReference>
<dbReference type="GO" id="GO:0006777">
    <property type="term" value="P:Mo-molybdopterin cofactor biosynthetic process"/>
    <property type="evidence" value="ECO:0007669"/>
    <property type="project" value="UniProtKB-UniRule"/>
</dbReference>
<dbReference type="GO" id="GO:0042128">
    <property type="term" value="P:nitrate assimilation"/>
    <property type="evidence" value="ECO:0007669"/>
    <property type="project" value="UniProtKB-UniRule"/>
</dbReference>
<dbReference type="CDD" id="cd02791">
    <property type="entry name" value="MopB_CT_Nitrate-R-NapA-like"/>
    <property type="match status" value="1"/>
</dbReference>
<dbReference type="CDD" id="cd02754">
    <property type="entry name" value="MopB_Nitrate-R-NapA-like"/>
    <property type="match status" value="1"/>
</dbReference>
<dbReference type="FunFam" id="2.40.40.20:FF:000005">
    <property type="entry name" value="Periplasmic nitrate reductase"/>
    <property type="match status" value="1"/>
</dbReference>
<dbReference type="FunFam" id="3.40.228.10:FF:000001">
    <property type="entry name" value="Periplasmic nitrate reductase"/>
    <property type="match status" value="1"/>
</dbReference>
<dbReference type="Gene3D" id="2.40.40.20">
    <property type="match status" value="1"/>
</dbReference>
<dbReference type="Gene3D" id="3.30.200.210">
    <property type="match status" value="1"/>
</dbReference>
<dbReference type="Gene3D" id="3.40.50.740">
    <property type="match status" value="1"/>
</dbReference>
<dbReference type="Gene3D" id="3.40.228.10">
    <property type="entry name" value="Dimethylsulfoxide Reductase, domain 2"/>
    <property type="match status" value="1"/>
</dbReference>
<dbReference type="HAMAP" id="MF_01630">
    <property type="entry name" value="Nitrate_reduct_NapA"/>
    <property type="match status" value="1"/>
</dbReference>
<dbReference type="InterPro" id="IPR009010">
    <property type="entry name" value="Asp_de-COase-like_dom_sf"/>
</dbReference>
<dbReference type="InterPro" id="IPR041957">
    <property type="entry name" value="CT_Nitrate-R-NapA-like"/>
</dbReference>
<dbReference type="InterPro" id="IPR006657">
    <property type="entry name" value="MoPterin_dinucl-bd_dom"/>
</dbReference>
<dbReference type="InterPro" id="IPR006656">
    <property type="entry name" value="Mopterin_OxRdtase"/>
</dbReference>
<dbReference type="InterPro" id="IPR006963">
    <property type="entry name" value="Mopterin_OxRdtase_4Fe-4S_dom"/>
</dbReference>
<dbReference type="InterPro" id="IPR027467">
    <property type="entry name" value="MopterinOxRdtase_cofactor_BS"/>
</dbReference>
<dbReference type="InterPro" id="IPR010051">
    <property type="entry name" value="Periplasm_NO3_reductase_lsu"/>
</dbReference>
<dbReference type="InterPro" id="IPR050123">
    <property type="entry name" value="Prok_molybdopt-oxidoreductase"/>
</dbReference>
<dbReference type="InterPro" id="IPR006311">
    <property type="entry name" value="TAT_signal"/>
</dbReference>
<dbReference type="InterPro" id="IPR019546">
    <property type="entry name" value="TAT_signal_bac_arc"/>
</dbReference>
<dbReference type="NCBIfam" id="TIGR01706">
    <property type="entry name" value="NAPA"/>
    <property type="match status" value="1"/>
</dbReference>
<dbReference type="NCBIfam" id="NF010055">
    <property type="entry name" value="PRK13532.1"/>
    <property type="match status" value="1"/>
</dbReference>
<dbReference type="NCBIfam" id="TIGR01409">
    <property type="entry name" value="TAT_signal_seq"/>
    <property type="match status" value="1"/>
</dbReference>
<dbReference type="PANTHER" id="PTHR43105:SF11">
    <property type="entry name" value="PERIPLASMIC NITRATE REDUCTASE"/>
    <property type="match status" value="1"/>
</dbReference>
<dbReference type="PANTHER" id="PTHR43105">
    <property type="entry name" value="RESPIRATORY NITRATE REDUCTASE"/>
    <property type="match status" value="1"/>
</dbReference>
<dbReference type="Pfam" id="PF04879">
    <property type="entry name" value="Molybdop_Fe4S4"/>
    <property type="match status" value="1"/>
</dbReference>
<dbReference type="Pfam" id="PF00384">
    <property type="entry name" value="Molybdopterin"/>
    <property type="match status" value="1"/>
</dbReference>
<dbReference type="Pfam" id="PF01568">
    <property type="entry name" value="Molydop_binding"/>
    <property type="match status" value="1"/>
</dbReference>
<dbReference type="SMART" id="SM00926">
    <property type="entry name" value="Molybdop_Fe4S4"/>
    <property type="match status" value="1"/>
</dbReference>
<dbReference type="SUPFAM" id="SSF50692">
    <property type="entry name" value="ADC-like"/>
    <property type="match status" value="1"/>
</dbReference>
<dbReference type="SUPFAM" id="SSF53706">
    <property type="entry name" value="Formate dehydrogenase/DMSO reductase, domains 1-3"/>
    <property type="match status" value="1"/>
</dbReference>
<dbReference type="PROSITE" id="PS51669">
    <property type="entry name" value="4FE4S_MOW_BIS_MGD"/>
    <property type="match status" value="1"/>
</dbReference>
<dbReference type="PROSITE" id="PS00551">
    <property type="entry name" value="MOLYBDOPTERIN_PROK_1"/>
    <property type="match status" value="1"/>
</dbReference>
<dbReference type="PROSITE" id="PS51318">
    <property type="entry name" value="TAT"/>
    <property type="match status" value="1"/>
</dbReference>
<evidence type="ECO:0000255" key="1">
    <source>
        <dbReference type="HAMAP-Rule" id="MF_01630"/>
    </source>
</evidence>
<evidence type="ECO:0000305" key="2"/>
<accession>Q0TFN6</accession>
<sequence>MKLSRRSFMKANAVAAAAAAAGLSVPGVARAVVGQQEAIKWDKAPCRFCGTGCGVLVGTQQGRVVACQGDPDAPVNRGLNCIKGYFLPKIMYGKDRLTQPLLRMKNGKYDKEGEFTPITWDQAFDVMEEKFKTALKEKGPESIGMFGSGQWTIWEGYAASKLFKAGFRSNNIDPNARHCMASAVVGFMRTFGMDEPMGCYDDIEQADAFVLWGANMAEMHPILWSRITNRRLSNQNVTVAVLSTYQHRSFELADNGIIFTPQSDLVILNYIANYIIQNNAINQDFFSKHVNLRKGATDIGYGLRPTHPLEKAAKNPGSDASEPMSFEDYKAFVAEYTLEKTAEMTGVPKDQLEQLAQLYADPNKKVISYWTMGFNQHTRGVWANNLVYNLHLLTGKISQPGCGPFSLTGQPSACGTAREVGTFAHRLPADMVVTNEKHRDICEKKWNIPSGTIPAKIGLHAVAQDRALKDGKLNVYWTMCTNNMQAGPNINEERMPGWRDPRNFIIVSDPYPTVSALAADLILPTAMWVEKEGAYGNAERRTQFWRQQVQAPGEAKSDLWQLVQFSRRFKTEEVWPEELLAKKPELRGKTLYEVLYATPEVSKFPLSELAEDQLNDESRELGFYLQKGLFEEYAWFGRGHGHDLAPFDDYHKARGLRWPVVNGKETQWRYSEGNDPYVKAGEGYKFYGKPDGKAVIFALPFEPAAEAPDEEYDLWLSTGRVLEHWHTGSMTRRVPELHRAFPEAVLFIHPLDAKARDLRRGDKVKVVSRRGEVISIVETRGRNRPPQGLVYMPFFDAAQLVNKLTLDATDPLSKETDFKKCAVKLEKV</sequence>